<sequence length="305" mass="32214">MKRPDLSVEIAGIKLRNPVMTASGTFGYGEEFAAYVNLEKIGAIITKGLSLKPKAGNPTPRIQETTGGMLNAIGLQNVGIDAFIEKKVPFLRTVNTPAIVNFFGNTVEEYAELAERLDKIPEVAGMEINISCPNVKHGGIVFGTEPKAAYSVVKAVREATIKPVIVKLSPNVTDIVEMAWACADAEADALSLINTLTGMAIDLKSRRPILANVTGGLSGPAVKPVALRMVWQVAKAVKIPVIGIGGIMSGTDALEFMLAGATAVQVGTANFLDPAASERIAAEMEQYLVNNGITDVKELIGALQV</sequence>
<keyword id="KW-0963">Cytoplasm</keyword>
<keyword id="KW-0285">Flavoprotein</keyword>
<keyword id="KW-0288">FMN</keyword>
<keyword id="KW-0520">NAD</keyword>
<keyword id="KW-0560">Oxidoreductase</keyword>
<keyword id="KW-0665">Pyrimidine biosynthesis</keyword>
<keyword id="KW-1185">Reference proteome</keyword>
<dbReference type="EC" id="1.3.1.14"/>
<dbReference type="EMBL" id="CP000148">
    <property type="protein sequence ID" value="ABB32070.1"/>
    <property type="molecule type" value="Genomic_DNA"/>
</dbReference>
<dbReference type="RefSeq" id="WP_004512005.1">
    <property type="nucleotide sequence ID" value="NC_007517.1"/>
</dbReference>
<dbReference type="SMR" id="Q39UK4"/>
<dbReference type="STRING" id="269799.Gmet_1841"/>
<dbReference type="KEGG" id="gme:Gmet_1841"/>
<dbReference type="eggNOG" id="COG0167">
    <property type="taxonomic scope" value="Bacteria"/>
</dbReference>
<dbReference type="HOGENOM" id="CLU_042042_0_0_7"/>
<dbReference type="UniPathway" id="UPA00070">
    <property type="reaction ID" value="UER00945"/>
</dbReference>
<dbReference type="Proteomes" id="UP000007073">
    <property type="component" value="Chromosome"/>
</dbReference>
<dbReference type="GO" id="GO:0005737">
    <property type="term" value="C:cytoplasm"/>
    <property type="evidence" value="ECO:0007669"/>
    <property type="project" value="UniProtKB-SubCell"/>
</dbReference>
<dbReference type="GO" id="GO:0004589">
    <property type="term" value="F:dihydroorotate dehydrogenase (NAD+) activity"/>
    <property type="evidence" value="ECO:0007669"/>
    <property type="project" value="UniProtKB-EC"/>
</dbReference>
<dbReference type="GO" id="GO:0006207">
    <property type="term" value="P:'de novo' pyrimidine nucleobase biosynthetic process"/>
    <property type="evidence" value="ECO:0007669"/>
    <property type="project" value="InterPro"/>
</dbReference>
<dbReference type="GO" id="GO:0044205">
    <property type="term" value="P:'de novo' UMP biosynthetic process"/>
    <property type="evidence" value="ECO:0007669"/>
    <property type="project" value="UniProtKB-UniRule"/>
</dbReference>
<dbReference type="CDD" id="cd04740">
    <property type="entry name" value="DHOD_1B_like"/>
    <property type="match status" value="1"/>
</dbReference>
<dbReference type="FunFam" id="3.20.20.70:FF:000069">
    <property type="entry name" value="Dihydroorotate dehydrogenase"/>
    <property type="match status" value="1"/>
</dbReference>
<dbReference type="Gene3D" id="3.20.20.70">
    <property type="entry name" value="Aldolase class I"/>
    <property type="match status" value="1"/>
</dbReference>
<dbReference type="HAMAP" id="MF_00224">
    <property type="entry name" value="DHO_dh_type1"/>
    <property type="match status" value="1"/>
</dbReference>
<dbReference type="InterPro" id="IPR013785">
    <property type="entry name" value="Aldolase_TIM"/>
</dbReference>
<dbReference type="InterPro" id="IPR050074">
    <property type="entry name" value="DHO_dehydrogenase"/>
</dbReference>
<dbReference type="InterPro" id="IPR033888">
    <property type="entry name" value="DHOD_1B"/>
</dbReference>
<dbReference type="InterPro" id="IPR024920">
    <property type="entry name" value="Dihydroorotate_DH_1"/>
</dbReference>
<dbReference type="InterPro" id="IPR012135">
    <property type="entry name" value="Dihydroorotate_DH_1_2"/>
</dbReference>
<dbReference type="InterPro" id="IPR005720">
    <property type="entry name" value="Dihydroorotate_DH_cat"/>
</dbReference>
<dbReference type="InterPro" id="IPR001295">
    <property type="entry name" value="Dihydroorotate_DH_CS"/>
</dbReference>
<dbReference type="InterPro" id="IPR049622">
    <property type="entry name" value="Dihydroorotate_DH_I"/>
</dbReference>
<dbReference type="NCBIfam" id="NF005574">
    <property type="entry name" value="PRK07259.1"/>
    <property type="match status" value="1"/>
</dbReference>
<dbReference type="NCBIfam" id="TIGR01037">
    <property type="entry name" value="pyrD_sub1_fam"/>
    <property type="match status" value="1"/>
</dbReference>
<dbReference type="PANTHER" id="PTHR48109:SF1">
    <property type="entry name" value="DIHYDROOROTATE DEHYDROGENASE (FUMARATE)"/>
    <property type="match status" value="1"/>
</dbReference>
<dbReference type="PANTHER" id="PTHR48109">
    <property type="entry name" value="DIHYDROOROTATE DEHYDROGENASE (QUINONE), MITOCHONDRIAL-RELATED"/>
    <property type="match status" value="1"/>
</dbReference>
<dbReference type="Pfam" id="PF01180">
    <property type="entry name" value="DHO_dh"/>
    <property type="match status" value="1"/>
</dbReference>
<dbReference type="PIRSF" id="PIRSF000164">
    <property type="entry name" value="DHO_oxidase"/>
    <property type="match status" value="1"/>
</dbReference>
<dbReference type="SUPFAM" id="SSF51395">
    <property type="entry name" value="FMN-linked oxidoreductases"/>
    <property type="match status" value="1"/>
</dbReference>
<dbReference type="PROSITE" id="PS00911">
    <property type="entry name" value="DHODEHASE_1"/>
    <property type="match status" value="1"/>
</dbReference>
<dbReference type="PROSITE" id="PS00912">
    <property type="entry name" value="DHODEHASE_2"/>
    <property type="match status" value="1"/>
</dbReference>
<reference key="1">
    <citation type="journal article" date="2009" name="BMC Microbiol.">
        <title>The genome sequence of Geobacter metallireducens: features of metabolism, physiology and regulation common and dissimilar to Geobacter sulfurreducens.</title>
        <authorList>
            <person name="Aklujkar M."/>
            <person name="Krushkal J."/>
            <person name="DiBartolo G."/>
            <person name="Lapidus A."/>
            <person name="Land M.L."/>
            <person name="Lovley D.R."/>
        </authorList>
    </citation>
    <scope>NUCLEOTIDE SEQUENCE [LARGE SCALE GENOMIC DNA]</scope>
    <source>
        <strain>ATCC 53774 / DSM 7210 / GS-15</strain>
    </source>
</reference>
<organism>
    <name type="scientific">Geobacter metallireducens (strain ATCC 53774 / DSM 7210 / GS-15)</name>
    <dbReference type="NCBI Taxonomy" id="269799"/>
    <lineage>
        <taxon>Bacteria</taxon>
        <taxon>Pseudomonadati</taxon>
        <taxon>Thermodesulfobacteriota</taxon>
        <taxon>Desulfuromonadia</taxon>
        <taxon>Geobacterales</taxon>
        <taxon>Geobacteraceae</taxon>
        <taxon>Geobacter</taxon>
    </lineage>
</organism>
<protein>
    <recommendedName>
        <fullName>Dihydroorotate dehydrogenase B (NAD(+)), catalytic subunit</fullName>
        <shortName>DHOD B</shortName>
        <shortName>DHODase B</shortName>
        <shortName>DHOdehase B</shortName>
        <ecNumber>1.3.1.14</ecNumber>
    </recommendedName>
    <alternativeName>
        <fullName>Dihydroorotate oxidase B</fullName>
    </alternativeName>
    <alternativeName>
        <fullName>Orotate reductase (NADH)</fullName>
    </alternativeName>
</protein>
<accession>Q39UK4</accession>
<proteinExistence type="inferred from homology"/>
<feature type="chain" id="PRO_0000336444" description="Dihydroorotate dehydrogenase B (NAD(+)), catalytic subunit">
    <location>
        <begin position="1"/>
        <end position="305"/>
    </location>
</feature>
<feature type="active site" description="Nucleophile">
    <location>
        <position position="132"/>
    </location>
</feature>
<feature type="binding site" evidence="1">
    <location>
        <position position="23"/>
    </location>
    <ligand>
        <name>FMN</name>
        <dbReference type="ChEBI" id="CHEBI:58210"/>
    </ligand>
</feature>
<feature type="binding site" evidence="1">
    <location>
        <begin position="47"/>
        <end position="48"/>
    </location>
    <ligand>
        <name>FMN</name>
        <dbReference type="ChEBI" id="CHEBI:58210"/>
    </ligand>
</feature>
<feature type="binding site" evidence="1">
    <location>
        <position position="47"/>
    </location>
    <ligand>
        <name>substrate</name>
    </ligand>
</feature>
<feature type="binding site" evidence="1">
    <location>
        <begin position="71"/>
        <end position="75"/>
    </location>
    <ligand>
        <name>substrate</name>
    </ligand>
</feature>
<feature type="binding site" evidence="1">
    <location>
        <position position="101"/>
    </location>
    <ligand>
        <name>FMN</name>
        <dbReference type="ChEBI" id="CHEBI:58210"/>
    </ligand>
</feature>
<feature type="binding site" evidence="1">
    <location>
        <position position="129"/>
    </location>
    <ligand>
        <name>FMN</name>
        <dbReference type="ChEBI" id="CHEBI:58210"/>
    </ligand>
</feature>
<feature type="binding site" evidence="1">
    <location>
        <position position="129"/>
    </location>
    <ligand>
        <name>substrate</name>
    </ligand>
</feature>
<feature type="binding site" evidence="1">
    <location>
        <position position="167"/>
    </location>
    <ligand>
        <name>FMN</name>
        <dbReference type="ChEBI" id="CHEBI:58210"/>
    </ligand>
</feature>
<feature type="binding site" evidence="1">
    <location>
        <position position="193"/>
    </location>
    <ligand>
        <name>FMN</name>
        <dbReference type="ChEBI" id="CHEBI:58210"/>
    </ligand>
</feature>
<feature type="binding site" evidence="1">
    <location>
        <begin position="194"/>
        <end position="195"/>
    </location>
    <ligand>
        <name>substrate</name>
    </ligand>
</feature>
<feature type="binding site" evidence="1">
    <location>
        <position position="219"/>
    </location>
    <ligand>
        <name>FMN</name>
        <dbReference type="ChEBI" id="CHEBI:58210"/>
    </ligand>
</feature>
<feature type="binding site" evidence="1">
    <location>
        <begin position="245"/>
        <end position="246"/>
    </location>
    <ligand>
        <name>FMN</name>
        <dbReference type="ChEBI" id="CHEBI:58210"/>
    </ligand>
</feature>
<feature type="binding site" evidence="1">
    <location>
        <begin position="267"/>
        <end position="268"/>
    </location>
    <ligand>
        <name>FMN</name>
        <dbReference type="ChEBI" id="CHEBI:58210"/>
    </ligand>
</feature>
<name>PYRDB_GEOMG</name>
<comment type="function">
    <text evidence="1">Catalyzes the conversion of dihydroorotate to orotate with NAD(+) as electron acceptor.</text>
</comment>
<comment type="catalytic activity">
    <reaction>
        <text>(S)-dihydroorotate + NAD(+) = orotate + NADH + H(+)</text>
        <dbReference type="Rhea" id="RHEA:13513"/>
        <dbReference type="ChEBI" id="CHEBI:15378"/>
        <dbReference type="ChEBI" id="CHEBI:30839"/>
        <dbReference type="ChEBI" id="CHEBI:30864"/>
        <dbReference type="ChEBI" id="CHEBI:57540"/>
        <dbReference type="ChEBI" id="CHEBI:57945"/>
        <dbReference type="EC" id="1.3.1.14"/>
    </reaction>
</comment>
<comment type="cofactor">
    <cofactor evidence="1">
        <name>FMN</name>
        <dbReference type="ChEBI" id="CHEBI:58210"/>
    </cofactor>
    <text evidence="1">Binds 1 FMN per subunit.</text>
</comment>
<comment type="pathway">
    <text>Pyrimidine metabolism; UMP biosynthesis via de novo pathway; orotate from (S)-dihydroorotate (NAD(+) route): step 1/1.</text>
</comment>
<comment type="subunit">
    <text evidence="1">Heterotetramer of 2 PyrK and 2 PyrD type B subunits.</text>
</comment>
<comment type="subcellular location">
    <subcellularLocation>
        <location evidence="1">Cytoplasm</location>
    </subcellularLocation>
</comment>
<comment type="similarity">
    <text evidence="2">Belongs to the dihydroorotate dehydrogenase family. Type 1 subfamily.</text>
</comment>
<evidence type="ECO:0000250" key="1"/>
<evidence type="ECO:0000305" key="2"/>
<gene>
    <name type="primary">pyrD</name>
    <name type="ordered locus">Gmet_1841</name>
</gene>